<protein>
    <recommendedName>
        <fullName evidence="1">Small ribosomal subunit protein uS13</fullName>
    </recommendedName>
    <alternativeName>
        <fullName evidence="2">30S ribosomal protein S13</fullName>
    </alternativeName>
</protein>
<accession>C3PP85</accession>
<evidence type="ECO:0000255" key="1">
    <source>
        <dbReference type="HAMAP-Rule" id="MF_01315"/>
    </source>
</evidence>
<evidence type="ECO:0000305" key="2"/>
<name>RS13_RICAE</name>
<comment type="function">
    <text evidence="1">Located at the top of the head of the 30S subunit, it contacts several helices of the 16S rRNA. In the 70S ribosome it contacts the 23S rRNA (bridge B1a) and protein L5 of the 50S subunit (bridge B1b), connecting the 2 subunits; these bridges are implicated in subunit movement. Contacts the tRNAs in the A and P-sites.</text>
</comment>
<comment type="subunit">
    <text evidence="1">Part of the 30S ribosomal subunit. Forms a loose heterodimer with protein S19. Forms two bridges to the 50S subunit in the 70S ribosome.</text>
</comment>
<comment type="similarity">
    <text evidence="1">Belongs to the universal ribosomal protein uS13 family.</text>
</comment>
<keyword id="KW-0687">Ribonucleoprotein</keyword>
<keyword id="KW-0689">Ribosomal protein</keyword>
<keyword id="KW-0694">RNA-binding</keyword>
<keyword id="KW-0699">rRNA-binding</keyword>
<keyword id="KW-0820">tRNA-binding</keyword>
<dbReference type="EMBL" id="CP001612">
    <property type="protein sequence ID" value="ACP53745.1"/>
    <property type="molecule type" value="Genomic_DNA"/>
</dbReference>
<dbReference type="RefSeq" id="WP_004997837.1">
    <property type="nucleotide sequence ID" value="NC_012633.1"/>
</dbReference>
<dbReference type="SMR" id="C3PP85"/>
<dbReference type="GeneID" id="95361464"/>
<dbReference type="KEGG" id="raf:RAF_ORF0890"/>
<dbReference type="HOGENOM" id="CLU_103849_1_2_5"/>
<dbReference type="Proteomes" id="UP000002305">
    <property type="component" value="Chromosome"/>
</dbReference>
<dbReference type="GO" id="GO:0005829">
    <property type="term" value="C:cytosol"/>
    <property type="evidence" value="ECO:0007669"/>
    <property type="project" value="TreeGrafter"/>
</dbReference>
<dbReference type="GO" id="GO:0015935">
    <property type="term" value="C:small ribosomal subunit"/>
    <property type="evidence" value="ECO:0007669"/>
    <property type="project" value="TreeGrafter"/>
</dbReference>
<dbReference type="GO" id="GO:0019843">
    <property type="term" value="F:rRNA binding"/>
    <property type="evidence" value="ECO:0007669"/>
    <property type="project" value="UniProtKB-UniRule"/>
</dbReference>
<dbReference type="GO" id="GO:0003735">
    <property type="term" value="F:structural constituent of ribosome"/>
    <property type="evidence" value="ECO:0007669"/>
    <property type="project" value="InterPro"/>
</dbReference>
<dbReference type="GO" id="GO:0000049">
    <property type="term" value="F:tRNA binding"/>
    <property type="evidence" value="ECO:0007669"/>
    <property type="project" value="UniProtKB-UniRule"/>
</dbReference>
<dbReference type="GO" id="GO:0006412">
    <property type="term" value="P:translation"/>
    <property type="evidence" value="ECO:0007669"/>
    <property type="project" value="UniProtKB-UniRule"/>
</dbReference>
<dbReference type="FunFam" id="1.10.8.50:FF:000001">
    <property type="entry name" value="30S ribosomal protein S13"/>
    <property type="match status" value="1"/>
</dbReference>
<dbReference type="Gene3D" id="1.10.8.50">
    <property type="match status" value="1"/>
</dbReference>
<dbReference type="Gene3D" id="4.10.910.10">
    <property type="entry name" value="30s ribosomal protein s13, domain 2"/>
    <property type="match status" value="1"/>
</dbReference>
<dbReference type="HAMAP" id="MF_01315">
    <property type="entry name" value="Ribosomal_uS13"/>
    <property type="match status" value="1"/>
</dbReference>
<dbReference type="InterPro" id="IPR027437">
    <property type="entry name" value="Rbsml_uS13_C"/>
</dbReference>
<dbReference type="InterPro" id="IPR001892">
    <property type="entry name" value="Ribosomal_uS13"/>
</dbReference>
<dbReference type="InterPro" id="IPR010979">
    <property type="entry name" value="Ribosomal_uS13-like_H2TH"/>
</dbReference>
<dbReference type="InterPro" id="IPR019980">
    <property type="entry name" value="Ribosomal_uS13_bac-type"/>
</dbReference>
<dbReference type="InterPro" id="IPR018269">
    <property type="entry name" value="Ribosomal_uS13_CS"/>
</dbReference>
<dbReference type="NCBIfam" id="TIGR03631">
    <property type="entry name" value="uS13_bact"/>
    <property type="match status" value="1"/>
</dbReference>
<dbReference type="PANTHER" id="PTHR10871">
    <property type="entry name" value="30S RIBOSOMAL PROTEIN S13/40S RIBOSOMAL PROTEIN S18"/>
    <property type="match status" value="1"/>
</dbReference>
<dbReference type="PANTHER" id="PTHR10871:SF1">
    <property type="entry name" value="SMALL RIBOSOMAL SUBUNIT PROTEIN US13M"/>
    <property type="match status" value="1"/>
</dbReference>
<dbReference type="Pfam" id="PF00416">
    <property type="entry name" value="Ribosomal_S13"/>
    <property type="match status" value="1"/>
</dbReference>
<dbReference type="PIRSF" id="PIRSF002134">
    <property type="entry name" value="Ribosomal_S13"/>
    <property type="match status" value="1"/>
</dbReference>
<dbReference type="SUPFAM" id="SSF46946">
    <property type="entry name" value="S13-like H2TH domain"/>
    <property type="match status" value="1"/>
</dbReference>
<dbReference type="PROSITE" id="PS00646">
    <property type="entry name" value="RIBOSOMAL_S13_1"/>
    <property type="match status" value="1"/>
</dbReference>
<dbReference type="PROSITE" id="PS50159">
    <property type="entry name" value="RIBOSOMAL_S13_2"/>
    <property type="match status" value="1"/>
</dbReference>
<feature type="chain" id="PRO_1000214405" description="Small ribosomal subunit protein uS13">
    <location>
        <begin position="1"/>
        <end position="125"/>
    </location>
</feature>
<proteinExistence type="inferred from homology"/>
<sequence length="125" mass="14126">MARIASVNIPDNKRLVVSLTYIYGLGPTMAAEICNKAKISKDKKVKELTDQELIGLRNIIESEYKVEGDLRREVTLNIKKKKDIRCYQGLRHIRKLPVRGQNTHSNARTRKGKAIAIAGKKKAVK</sequence>
<gene>
    <name evidence="1" type="primary">rpsM</name>
    <name type="ordered locus">RAF_ORF0890</name>
</gene>
<reference key="1">
    <citation type="journal article" date="2009" name="BMC Genomics">
        <title>Analysis of the Rickettsia africae genome reveals that virulence acquisition in Rickettsia species may be explained by genome reduction.</title>
        <authorList>
            <person name="Fournier P.-E."/>
            <person name="El Karkouri K."/>
            <person name="Leroy Q."/>
            <person name="Robert C."/>
            <person name="Giumelli B."/>
            <person name="Renesto P."/>
            <person name="Socolovschi C."/>
            <person name="Parola P."/>
            <person name="Audic S."/>
            <person name="Raoult D."/>
        </authorList>
    </citation>
    <scope>NUCLEOTIDE SEQUENCE [LARGE SCALE GENOMIC DNA]</scope>
    <source>
        <strain>ESF-5</strain>
    </source>
</reference>
<organism>
    <name type="scientific">Rickettsia africae (strain ESF-5)</name>
    <dbReference type="NCBI Taxonomy" id="347255"/>
    <lineage>
        <taxon>Bacteria</taxon>
        <taxon>Pseudomonadati</taxon>
        <taxon>Pseudomonadota</taxon>
        <taxon>Alphaproteobacteria</taxon>
        <taxon>Rickettsiales</taxon>
        <taxon>Rickettsiaceae</taxon>
        <taxon>Rickettsieae</taxon>
        <taxon>Rickettsia</taxon>
        <taxon>spotted fever group</taxon>
    </lineage>
</organism>